<dbReference type="EC" id="2.3.1.50"/>
<dbReference type="EMBL" id="AP004153">
    <property type="protein sequence ID" value="BAD19391.1"/>
    <property type="molecule type" value="Genomic_DNA"/>
</dbReference>
<dbReference type="EMBL" id="AP008208">
    <property type="protein sequence ID" value="BAF10365.2"/>
    <property type="molecule type" value="Genomic_DNA"/>
</dbReference>
<dbReference type="EMBL" id="AP014958">
    <property type="protein sequence ID" value="BAS81479.1"/>
    <property type="molecule type" value="Genomic_DNA"/>
</dbReference>
<dbReference type="EMBL" id="CM000139">
    <property type="protein sequence ID" value="EEE58013.1"/>
    <property type="molecule type" value="Genomic_DNA"/>
</dbReference>
<dbReference type="EMBL" id="AK073935">
    <property type="protein sequence ID" value="BAG93720.1"/>
    <property type="molecule type" value="mRNA"/>
</dbReference>
<dbReference type="EMBL" id="AK105851">
    <property type="protein sequence ID" value="BAG97394.1"/>
    <property type="molecule type" value="mRNA"/>
</dbReference>
<dbReference type="RefSeq" id="XP_015622652.1">
    <property type="nucleotide sequence ID" value="XM_015767166.1"/>
</dbReference>
<dbReference type="SMR" id="Q6K8E7"/>
<dbReference type="FunCoup" id="Q6K8E7">
    <property type="interactions" value="3310"/>
</dbReference>
<dbReference type="STRING" id="39947.Q6K8E7"/>
<dbReference type="PaxDb" id="39947-Q6K8E7"/>
<dbReference type="EnsemblPlants" id="Os02t0806900-01">
    <property type="protein sequence ID" value="Os02t0806900-01"/>
    <property type="gene ID" value="Os02g0806900"/>
</dbReference>
<dbReference type="Gramene" id="Os02t0806900-01">
    <property type="protein sequence ID" value="Os02t0806900-01"/>
    <property type="gene ID" value="Os02g0806900"/>
</dbReference>
<dbReference type="KEGG" id="dosa:Os02g0806900"/>
<dbReference type="eggNOG" id="KOG1358">
    <property type="taxonomic scope" value="Eukaryota"/>
</dbReference>
<dbReference type="HOGENOM" id="CLU_015846_0_1_1"/>
<dbReference type="InParanoid" id="Q6K8E7"/>
<dbReference type="OMA" id="IPFRAEC"/>
<dbReference type="OrthoDB" id="3168162at2759"/>
<dbReference type="PlantReactome" id="R-OSA-1119325">
    <property type="pathway name" value="Sphingolipid metabolism"/>
</dbReference>
<dbReference type="PlantReactome" id="R-OSA-1119610">
    <property type="pathway name" value="Biotin biosynthesis II"/>
</dbReference>
<dbReference type="UniPathway" id="UPA00222"/>
<dbReference type="Proteomes" id="UP000000763">
    <property type="component" value="Chromosome 2"/>
</dbReference>
<dbReference type="Proteomes" id="UP000007752">
    <property type="component" value="Chromosome 2"/>
</dbReference>
<dbReference type="Proteomes" id="UP000059680">
    <property type="component" value="Chromosome 2"/>
</dbReference>
<dbReference type="GO" id="GO:0005783">
    <property type="term" value="C:endoplasmic reticulum"/>
    <property type="evidence" value="ECO:0000318"/>
    <property type="project" value="GO_Central"/>
</dbReference>
<dbReference type="GO" id="GO:0005789">
    <property type="term" value="C:endoplasmic reticulum membrane"/>
    <property type="evidence" value="ECO:0007669"/>
    <property type="project" value="UniProtKB-SubCell"/>
</dbReference>
<dbReference type="GO" id="GO:0030170">
    <property type="term" value="F:pyridoxal phosphate binding"/>
    <property type="evidence" value="ECO:0007669"/>
    <property type="project" value="InterPro"/>
</dbReference>
<dbReference type="GO" id="GO:0004758">
    <property type="term" value="F:serine C-palmitoyltransferase activity"/>
    <property type="evidence" value="ECO:0000318"/>
    <property type="project" value="GO_Central"/>
</dbReference>
<dbReference type="GO" id="GO:0046513">
    <property type="term" value="P:ceramide biosynthetic process"/>
    <property type="evidence" value="ECO:0000318"/>
    <property type="project" value="GO_Central"/>
</dbReference>
<dbReference type="GO" id="GO:0046512">
    <property type="term" value="P:sphingosine biosynthetic process"/>
    <property type="evidence" value="ECO:0000318"/>
    <property type="project" value="GO_Central"/>
</dbReference>
<dbReference type="FunFam" id="3.40.640.10:FF:000049">
    <property type="entry name" value="serine palmitoyltransferase 1 isoform X1"/>
    <property type="match status" value="1"/>
</dbReference>
<dbReference type="Gene3D" id="3.90.1150.10">
    <property type="entry name" value="Aspartate Aminotransferase, domain 1"/>
    <property type="match status" value="1"/>
</dbReference>
<dbReference type="Gene3D" id="3.40.640.10">
    <property type="entry name" value="Type I PLP-dependent aspartate aminotransferase-like (Major domain)"/>
    <property type="match status" value="1"/>
</dbReference>
<dbReference type="InterPro" id="IPR004839">
    <property type="entry name" value="Aminotransferase_I/II_large"/>
</dbReference>
<dbReference type="InterPro" id="IPR050087">
    <property type="entry name" value="AON_synthase_class-II"/>
</dbReference>
<dbReference type="InterPro" id="IPR015424">
    <property type="entry name" value="PyrdxlP-dep_Trfase"/>
</dbReference>
<dbReference type="InterPro" id="IPR015421">
    <property type="entry name" value="PyrdxlP-dep_Trfase_major"/>
</dbReference>
<dbReference type="InterPro" id="IPR015422">
    <property type="entry name" value="PyrdxlP-dep_Trfase_small"/>
</dbReference>
<dbReference type="PANTHER" id="PTHR13693">
    <property type="entry name" value="CLASS II AMINOTRANSFERASE/8-AMINO-7-OXONONANOATE SYNTHASE"/>
    <property type="match status" value="1"/>
</dbReference>
<dbReference type="PANTHER" id="PTHR13693:SF2">
    <property type="entry name" value="SERINE PALMITOYLTRANSFERASE 1"/>
    <property type="match status" value="1"/>
</dbReference>
<dbReference type="Pfam" id="PF00155">
    <property type="entry name" value="Aminotran_1_2"/>
    <property type="match status" value="1"/>
</dbReference>
<dbReference type="SUPFAM" id="SSF53383">
    <property type="entry name" value="PLP-dependent transferases"/>
    <property type="match status" value="1"/>
</dbReference>
<reference key="1">
    <citation type="journal article" date="2005" name="Nature">
        <title>The map-based sequence of the rice genome.</title>
        <authorList>
            <consortium name="International rice genome sequencing project (IRGSP)"/>
        </authorList>
    </citation>
    <scope>NUCLEOTIDE SEQUENCE [LARGE SCALE GENOMIC DNA]</scope>
    <source>
        <strain>cv. Nipponbare</strain>
    </source>
</reference>
<reference key="2">
    <citation type="journal article" date="2008" name="Nucleic Acids Res.">
        <title>The rice annotation project database (RAP-DB): 2008 update.</title>
        <authorList>
            <consortium name="The rice annotation project (RAP)"/>
        </authorList>
    </citation>
    <scope>GENOME REANNOTATION</scope>
    <source>
        <strain>cv. Nipponbare</strain>
    </source>
</reference>
<reference key="3">
    <citation type="journal article" date="2013" name="Rice">
        <title>Improvement of the Oryza sativa Nipponbare reference genome using next generation sequence and optical map data.</title>
        <authorList>
            <person name="Kawahara Y."/>
            <person name="de la Bastide M."/>
            <person name="Hamilton J.P."/>
            <person name="Kanamori H."/>
            <person name="McCombie W.R."/>
            <person name="Ouyang S."/>
            <person name="Schwartz D.C."/>
            <person name="Tanaka T."/>
            <person name="Wu J."/>
            <person name="Zhou S."/>
            <person name="Childs K.L."/>
            <person name="Davidson R.M."/>
            <person name="Lin H."/>
            <person name="Quesada-Ocampo L."/>
            <person name="Vaillancourt B."/>
            <person name="Sakai H."/>
            <person name="Lee S.S."/>
            <person name="Kim J."/>
            <person name="Numa H."/>
            <person name="Itoh T."/>
            <person name="Buell C.R."/>
            <person name="Matsumoto T."/>
        </authorList>
    </citation>
    <scope>GENOME REANNOTATION</scope>
    <source>
        <strain>cv. Nipponbare</strain>
    </source>
</reference>
<reference key="4">
    <citation type="journal article" date="2005" name="PLoS Biol.">
        <title>The genomes of Oryza sativa: a history of duplications.</title>
        <authorList>
            <person name="Yu J."/>
            <person name="Wang J."/>
            <person name="Lin W."/>
            <person name="Li S."/>
            <person name="Li H."/>
            <person name="Zhou J."/>
            <person name="Ni P."/>
            <person name="Dong W."/>
            <person name="Hu S."/>
            <person name="Zeng C."/>
            <person name="Zhang J."/>
            <person name="Zhang Y."/>
            <person name="Li R."/>
            <person name="Xu Z."/>
            <person name="Li S."/>
            <person name="Li X."/>
            <person name="Zheng H."/>
            <person name="Cong L."/>
            <person name="Lin L."/>
            <person name="Yin J."/>
            <person name="Geng J."/>
            <person name="Li G."/>
            <person name="Shi J."/>
            <person name="Liu J."/>
            <person name="Lv H."/>
            <person name="Li J."/>
            <person name="Wang J."/>
            <person name="Deng Y."/>
            <person name="Ran L."/>
            <person name="Shi X."/>
            <person name="Wang X."/>
            <person name="Wu Q."/>
            <person name="Li C."/>
            <person name="Ren X."/>
            <person name="Wang J."/>
            <person name="Wang X."/>
            <person name="Li D."/>
            <person name="Liu D."/>
            <person name="Zhang X."/>
            <person name="Ji Z."/>
            <person name="Zhao W."/>
            <person name="Sun Y."/>
            <person name="Zhang Z."/>
            <person name="Bao J."/>
            <person name="Han Y."/>
            <person name="Dong L."/>
            <person name="Ji J."/>
            <person name="Chen P."/>
            <person name="Wu S."/>
            <person name="Liu J."/>
            <person name="Xiao Y."/>
            <person name="Bu D."/>
            <person name="Tan J."/>
            <person name="Yang L."/>
            <person name="Ye C."/>
            <person name="Zhang J."/>
            <person name="Xu J."/>
            <person name="Zhou Y."/>
            <person name="Yu Y."/>
            <person name="Zhang B."/>
            <person name="Zhuang S."/>
            <person name="Wei H."/>
            <person name="Liu B."/>
            <person name="Lei M."/>
            <person name="Yu H."/>
            <person name="Li Y."/>
            <person name="Xu H."/>
            <person name="Wei S."/>
            <person name="He X."/>
            <person name="Fang L."/>
            <person name="Zhang Z."/>
            <person name="Zhang Y."/>
            <person name="Huang X."/>
            <person name="Su Z."/>
            <person name="Tong W."/>
            <person name="Li J."/>
            <person name="Tong Z."/>
            <person name="Li S."/>
            <person name="Ye J."/>
            <person name="Wang L."/>
            <person name="Fang L."/>
            <person name="Lei T."/>
            <person name="Chen C.-S."/>
            <person name="Chen H.-C."/>
            <person name="Xu Z."/>
            <person name="Li H."/>
            <person name="Huang H."/>
            <person name="Zhang F."/>
            <person name="Xu H."/>
            <person name="Li N."/>
            <person name="Zhao C."/>
            <person name="Li S."/>
            <person name="Dong L."/>
            <person name="Huang Y."/>
            <person name="Li L."/>
            <person name="Xi Y."/>
            <person name="Qi Q."/>
            <person name="Li W."/>
            <person name="Zhang B."/>
            <person name="Hu W."/>
            <person name="Zhang Y."/>
            <person name="Tian X."/>
            <person name="Jiao Y."/>
            <person name="Liang X."/>
            <person name="Jin J."/>
            <person name="Gao L."/>
            <person name="Zheng W."/>
            <person name="Hao B."/>
            <person name="Liu S.-M."/>
            <person name="Wang W."/>
            <person name="Yuan L."/>
            <person name="Cao M."/>
            <person name="McDermott J."/>
            <person name="Samudrala R."/>
            <person name="Wang J."/>
            <person name="Wong G.K.-S."/>
            <person name="Yang H."/>
        </authorList>
    </citation>
    <scope>NUCLEOTIDE SEQUENCE [LARGE SCALE GENOMIC DNA]</scope>
    <source>
        <strain>cv. Nipponbare</strain>
    </source>
</reference>
<reference key="5">
    <citation type="journal article" date="2003" name="Science">
        <title>Collection, mapping, and annotation of over 28,000 cDNA clones from japonica rice.</title>
        <authorList>
            <consortium name="The rice full-length cDNA consortium"/>
        </authorList>
    </citation>
    <scope>NUCLEOTIDE SEQUENCE [LARGE SCALE MRNA]</scope>
    <source>
        <strain>cv. Nipponbare</strain>
    </source>
</reference>
<evidence type="ECO:0000250" key="1"/>
<evidence type="ECO:0000255" key="2"/>
<evidence type="ECO:0000305" key="3"/>
<accession>Q6K8E7</accession>
<accession>A0A0P0VQY7</accession>
<accession>Q0DWM3</accession>
<name>LCB1B_ORYSJ</name>
<gene>
    <name type="ordered locus">Os02g0806900</name>
    <name type="ordered locus">LOC_Os02g56300</name>
    <name type="ORF">OJ1111_C07.25</name>
    <name type="ORF">OsJ_08792</name>
</gene>
<sequence length="481" mass="52010">MEMVLPVANATAAALARVSAMFNAPLARAVVFGIHIDGHLVVEGLLIAAILFQLSRKSYKPPKKPLTEREVDELCDEWQPEPLCPPIKEGARIEAPTLESAAGPHTIVDGKEVVNFASANYLGLIGNEKILDSCIGSVEKYGVGSCGPRGFYGTIDVHLDCETKIAKFLGTQDSILYSYGISTIFSVIPAFCKKGDIIVADEGVHWAVQNGLQLSRSTVVYFKHNDMASLASTLEKLTHGNKRTEKIRRYIVVEAIYQNSGQIAPLDEIVRLKEKYRFRVILEESHSFGVLGKSGRGLAEHYGVPIEKIDIITAGMGNALATDGGFCTGSIRVVDHQRLSSSGYVFSASLPPYLASAAISAVDHLEENPSVLANLRSNITLLHKELSDVQGLEIASNILSPIVFLKLKTSTGSAVADLELLEVISEKVLKEDSVFIAATKRSSLDKCRLPVGIRLFVSAGHTESDILKVSESLKRVAASVL</sequence>
<organism>
    <name type="scientific">Oryza sativa subsp. japonica</name>
    <name type="common">Rice</name>
    <dbReference type="NCBI Taxonomy" id="39947"/>
    <lineage>
        <taxon>Eukaryota</taxon>
        <taxon>Viridiplantae</taxon>
        <taxon>Streptophyta</taxon>
        <taxon>Embryophyta</taxon>
        <taxon>Tracheophyta</taxon>
        <taxon>Spermatophyta</taxon>
        <taxon>Magnoliopsida</taxon>
        <taxon>Liliopsida</taxon>
        <taxon>Poales</taxon>
        <taxon>Poaceae</taxon>
        <taxon>BOP clade</taxon>
        <taxon>Oryzoideae</taxon>
        <taxon>Oryzeae</taxon>
        <taxon>Oryzinae</taxon>
        <taxon>Oryza</taxon>
        <taxon>Oryza sativa</taxon>
    </lineage>
</organism>
<proteinExistence type="evidence at transcript level"/>
<feature type="chain" id="PRO_0000419148" description="Long chain base biosynthesis protein 1b">
    <location>
        <begin position="1"/>
        <end position="481"/>
    </location>
</feature>
<feature type="transmembrane region" description="Helical" evidence="2">
    <location>
        <begin position="32"/>
        <end position="52"/>
    </location>
</feature>
<comment type="function">
    <text evidence="1">Serine palmitoyltransferase (SPT). The heterodimer formed with LCB2 constitutes the catalytic core (By similarity).</text>
</comment>
<comment type="catalytic activity">
    <reaction>
        <text>L-serine + hexadecanoyl-CoA + H(+) = 3-oxosphinganine + CO2 + CoA</text>
        <dbReference type="Rhea" id="RHEA:14761"/>
        <dbReference type="ChEBI" id="CHEBI:15378"/>
        <dbReference type="ChEBI" id="CHEBI:16526"/>
        <dbReference type="ChEBI" id="CHEBI:33384"/>
        <dbReference type="ChEBI" id="CHEBI:57287"/>
        <dbReference type="ChEBI" id="CHEBI:57379"/>
        <dbReference type="ChEBI" id="CHEBI:58299"/>
        <dbReference type="EC" id="2.3.1.50"/>
    </reaction>
</comment>
<comment type="cofactor">
    <cofactor evidence="1">
        <name>pyridoxal 5'-phosphate</name>
        <dbReference type="ChEBI" id="CHEBI:597326"/>
    </cofactor>
</comment>
<comment type="pathway">
    <text>Lipid metabolism; sphingolipid metabolism.</text>
</comment>
<comment type="subunit">
    <text evidence="1">Heterodimer with LCB2. Component of the serine palmitoyltransferase (SPT) complex, composed of LCB1 and LCB2 (By similarity).</text>
</comment>
<comment type="subcellular location">
    <subcellularLocation>
        <location evidence="1">Endoplasmic reticulum membrane</location>
        <topology evidence="1">Single-pass membrane protein</topology>
    </subcellularLocation>
</comment>
<comment type="similarity">
    <text evidence="3">Belongs to the class-II pyridoxal-phosphate-dependent aminotransferase family.</text>
</comment>
<keyword id="KW-0012">Acyltransferase</keyword>
<keyword id="KW-0256">Endoplasmic reticulum</keyword>
<keyword id="KW-0443">Lipid metabolism</keyword>
<keyword id="KW-0472">Membrane</keyword>
<keyword id="KW-0663">Pyridoxal phosphate</keyword>
<keyword id="KW-1185">Reference proteome</keyword>
<keyword id="KW-0746">Sphingolipid metabolism</keyword>
<keyword id="KW-0808">Transferase</keyword>
<keyword id="KW-0812">Transmembrane</keyword>
<keyword id="KW-1133">Transmembrane helix</keyword>
<protein>
    <recommendedName>
        <fullName>Long chain base biosynthesis protein 1b</fullName>
        <ecNumber>2.3.1.50</ecNumber>
    </recommendedName>
</protein>